<protein>
    <recommendedName>
        <fullName evidence="4">Immunoglobulin kappa variable 11-125</fullName>
    </recommendedName>
    <alternativeName>
        <fullName evidence="3">Ig kappa chain V-V region UPC 61</fullName>
    </alternativeName>
</protein>
<keyword id="KW-1064">Adaptive immunity</keyword>
<keyword id="KW-0903">Direct protein sequencing</keyword>
<keyword id="KW-1015">Disulfide bond</keyword>
<keyword id="KW-0391">Immunity</keyword>
<keyword id="KW-1280">Immunoglobulin</keyword>
<keyword id="KW-1185">Reference proteome</keyword>
<reference key="1">
    <citation type="journal article" date="1979" name="J. Immunol.">
        <title>The structural basis of a hapten-inhibitable kappa-chain idiotype.</title>
        <authorList>
            <person name="Vrana M."/>
            <person name="Rudikoff S."/>
            <person name="Potter M."/>
        </authorList>
    </citation>
    <scope>PROTEIN SEQUENCE</scope>
</reference>
<sequence>DVQMIQSPSSLSASLGDIVTMTCQASQGTSINLNWFQQKPGKAPKLLIYGASILEDGVPSRFSGSRYGTDFTLTISSLEDEDMATYFCLQHSYLPYTFGGGTKLEIKR</sequence>
<name>KV5AH_MOUSE</name>
<proteinExistence type="evidence at protein level"/>
<comment type="miscellaneous">
    <text evidence="2">This chain was isolated from myeloma proteins that bind beta(2-1)-fructofuranosyl moieties (inulin).</text>
</comment>
<evidence type="ECO:0000255" key="1">
    <source>
        <dbReference type="PROSITE-ProRule" id="PRU00114"/>
    </source>
</evidence>
<evidence type="ECO:0000269" key="2">
    <source>
    </source>
</evidence>
<evidence type="ECO:0000303" key="3">
    <source>
    </source>
</evidence>
<evidence type="ECO:0000312" key="4">
    <source>
        <dbReference type="MGI" id="MGI:3642338"/>
    </source>
</evidence>
<feature type="chain" id="PRO_0000059805" description="Immunoglobulin kappa variable 11-125">
    <location>
        <begin position="1"/>
        <end position="108" status="greater than"/>
    </location>
</feature>
<feature type="region of interest" description="Framework-1">
    <location>
        <begin position="1"/>
        <end position="23"/>
    </location>
</feature>
<feature type="region of interest" description="Complementarity-determining-1">
    <location>
        <begin position="24"/>
        <end position="34"/>
    </location>
</feature>
<feature type="region of interest" description="Framework-2">
    <location>
        <begin position="35"/>
        <end position="49"/>
    </location>
</feature>
<feature type="region of interest" description="Complementarity-determining-2">
    <location>
        <begin position="50"/>
        <end position="56"/>
    </location>
</feature>
<feature type="region of interest" description="Framework-3">
    <location>
        <begin position="57"/>
        <end position="88"/>
    </location>
</feature>
<feature type="region of interest" description="Complementarity-determining-3">
    <location>
        <begin position="89"/>
        <end position="97"/>
    </location>
</feature>
<feature type="region of interest" description="Framework-4">
    <location>
        <begin position="98"/>
        <end position="108"/>
    </location>
</feature>
<feature type="disulfide bond" evidence="1">
    <location>
        <begin position="23"/>
        <end position="88"/>
    </location>
</feature>
<feature type="non-terminal residue">
    <location>
        <position position="108"/>
    </location>
</feature>
<organism>
    <name type="scientific">Mus musculus</name>
    <name type="common">Mouse</name>
    <dbReference type="NCBI Taxonomy" id="10090"/>
    <lineage>
        <taxon>Eukaryota</taxon>
        <taxon>Metazoa</taxon>
        <taxon>Chordata</taxon>
        <taxon>Craniata</taxon>
        <taxon>Vertebrata</taxon>
        <taxon>Euteleostomi</taxon>
        <taxon>Mammalia</taxon>
        <taxon>Eutheria</taxon>
        <taxon>Euarchontoglires</taxon>
        <taxon>Glires</taxon>
        <taxon>Rodentia</taxon>
        <taxon>Myomorpha</taxon>
        <taxon>Muroidea</taxon>
        <taxon>Muridae</taxon>
        <taxon>Murinae</taxon>
        <taxon>Mus</taxon>
        <taxon>Mus</taxon>
    </lineage>
</organism>
<dbReference type="PIR" id="A92808">
    <property type="entry name" value="KVMS61"/>
</dbReference>
<dbReference type="EMDB" id="EMD-25403"/>
<dbReference type="EMDB" id="EMD-35733"/>
<dbReference type="EMDB" id="EMD-35734"/>
<dbReference type="EMDB" id="EMD-36090"/>
<dbReference type="EMDB" id="EMD-36110"/>
<dbReference type="EMDB" id="EMD-36126"/>
<dbReference type="EMDB" id="EMD-38763"/>
<dbReference type="EMDB" id="EMD-40933"/>
<dbReference type="EMDB" id="EMD-40934"/>
<dbReference type="EMDB" id="EMD-40936"/>
<dbReference type="EMDB" id="EMD-40937"/>
<dbReference type="EMDB" id="EMD-61622"/>
<dbReference type="SMR" id="P01650"/>
<dbReference type="FunCoup" id="P01650">
    <property type="interactions" value="508"/>
</dbReference>
<dbReference type="AGR" id="MGI:3642338"/>
<dbReference type="MGI" id="MGI:3642338">
    <property type="gene designation" value="Igkv11-125"/>
</dbReference>
<dbReference type="InParanoid" id="P01650"/>
<dbReference type="Reactome" id="R-MMU-166663">
    <property type="pathway name" value="Initial triggering of complement"/>
</dbReference>
<dbReference type="Reactome" id="R-MMU-173623">
    <property type="pathway name" value="Classical antibody-mediated complement activation"/>
</dbReference>
<dbReference type="Reactome" id="R-MMU-198933">
    <property type="pathway name" value="Immunoregulatory interactions between a Lymphoid and a non-Lymphoid cell"/>
</dbReference>
<dbReference type="Reactome" id="R-MMU-202733">
    <property type="pathway name" value="Cell surface interactions at the vascular wall"/>
</dbReference>
<dbReference type="Reactome" id="R-MMU-2029481">
    <property type="pathway name" value="FCGR activation"/>
</dbReference>
<dbReference type="Reactome" id="R-MMU-2029482">
    <property type="pathway name" value="Regulation of actin dynamics for phagocytic cup formation"/>
</dbReference>
<dbReference type="Reactome" id="R-MMU-2029485">
    <property type="pathway name" value="Role of phospholipids in phagocytosis"/>
</dbReference>
<dbReference type="Reactome" id="R-MMU-2168880">
    <property type="pathway name" value="Scavenging of heme from plasma"/>
</dbReference>
<dbReference type="Reactome" id="R-MMU-2454202">
    <property type="pathway name" value="Fc epsilon receptor (FCERI) signaling"/>
</dbReference>
<dbReference type="Reactome" id="R-MMU-2730905">
    <property type="pathway name" value="Role of LAT2/NTAL/LAB on calcium mobilization"/>
</dbReference>
<dbReference type="Reactome" id="R-MMU-2871796">
    <property type="pathway name" value="FCERI mediated MAPK activation"/>
</dbReference>
<dbReference type="Reactome" id="R-MMU-2871809">
    <property type="pathway name" value="FCERI mediated Ca+2 mobilization"/>
</dbReference>
<dbReference type="Reactome" id="R-MMU-2871837">
    <property type="pathway name" value="FCERI mediated NF-kB activation"/>
</dbReference>
<dbReference type="Reactome" id="R-MMU-5690714">
    <property type="pathway name" value="CD22 mediated BCR regulation"/>
</dbReference>
<dbReference type="Reactome" id="R-MMU-977606">
    <property type="pathway name" value="Regulation of Complement cascade"/>
</dbReference>
<dbReference type="Reactome" id="R-MMU-983695">
    <property type="pathway name" value="Antigen activates B Cell Receptor (BCR) leading to generation of second messengers"/>
</dbReference>
<dbReference type="Proteomes" id="UP000000589">
    <property type="component" value="Unplaced"/>
</dbReference>
<dbReference type="RNAct" id="P01650">
    <property type="molecule type" value="protein"/>
</dbReference>
<dbReference type="GO" id="GO:0019814">
    <property type="term" value="C:immunoglobulin complex"/>
    <property type="evidence" value="ECO:0007669"/>
    <property type="project" value="UniProtKB-KW"/>
</dbReference>
<dbReference type="GO" id="GO:0002250">
    <property type="term" value="P:adaptive immune response"/>
    <property type="evidence" value="ECO:0007669"/>
    <property type="project" value="UniProtKB-KW"/>
</dbReference>
<dbReference type="CDD" id="cd04980">
    <property type="entry name" value="IgV_L_kappa"/>
    <property type="match status" value="1"/>
</dbReference>
<dbReference type="FunFam" id="2.60.40.10:FF:000212">
    <property type="entry name" value="Immunoglobulin kappa chain variable 12-38"/>
    <property type="match status" value="1"/>
</dbReference>
<dbReference type="Gene3D" id="2.60.40.10">
    <property type="entry name" value="Immunoglobulins"/>
    <property type="match status" value="1"/>
</dbReference>
<dbReference type="InterPro" id="IPR007110">
    <property type="entry name" value="Ig-like_dom"/>
</dbReference>
<dbReference type="InterPro" id="IPR036179">
    <property type="entry name" value="Ig-like_dom_sf"/>
</dbReference>
<dbReference type="InterPro" id="IPR013783">
    <property type="entry name" value="Ig-like_fold"/>
</dbReference>
<dbReference type="InterPro" id="IPR003599">
    <property type="entry name" value="Ig_sub"/>
</dbReference>
<dbReference type="InterPro" id="IPR013106">
    <property type="entry name" value="Ig_V-set"/>
</dbReference>
<dbReference type="InterPro" id="IPR050150">
    <property type="entry name" value="IgV_Light_Chain"/>
</dbReference>
<dbReference type="PANTHER" id="PTHR23267">
    <property type="entry name" value="IMMUNOGLOBULIN LIGHT CHAIN"/>
    <property type="match status" value="1"/>
</dbReference>
<dbReference type="Pfam" id="PF07686">
    <property type="entry name" value="V-set"/>
    <property type="match status" value="1"/>
</dbReference>
<dbReference type="SMART" id="SM00409">
    <property type="entry name" value="IG"/>
    <property type="match status" value="1"/>
</dbReference>
<dbReference type="SMART" id="SM00406">
    <property type="entry name" value="IGv"/>
    <property type="match status" value="1"/>
</dbReference>
<dbReference type="SUPFAM" id="SSF48726">
    <property type="entry name" value="Immunoglobulin"/>
    <property type="match status" value="1"/>
</dbReference>
<dbReference type="PROSITE" id="PS50835">
    <property type="entry name" value="IG_LIKE"/>
    <property type="match status" value="1"/>
</dbReference>
<gene>
    <name evidence="4" type="primary">Igkv11-125</name>
</gene>
<accession>P01650</accession>